<accession>Q86UV7</accession>
<accession>Q8N0S3</accession>
<keyword id="KW-0175">Coiled coil</keyword>
<keyword id="KW-0479">Metal-binding</keyword>
<keyword id="KW-1185">Reference proteome</keyword>
<keyword id="KW-0862">Zinc</keyword>
<keyword id="KW-0863">Zinc-finger</keyword>
<reference key="1">
    <citation type="journal article" date="2008" name="Eur. J. Hum. Genet.">
        <title>Williams-Beuren syndrome TRIM50 encodes an E3 ubiquitin ligase.</title>
        <authorList>
            <person name="Micale L."/>
            <person name="Fusco C."/>
            <person name="Augello B."/>
            <person name="Napolitano L.M.R."/>
            <person name="Dermitzakis E.T."/>
            <person name="Meroni G."/>
            <person name="Merla G."/>
            <person name="Reymond A."/>
        </authorList>
    </citation>
    <scope>NUCLEOTIDE SEQUENCE [MRNA]</scope>
</reference>
<reference key="2">
    <citation type="journal article" date="2003" name="Nature">
        <title>The DNA sequence of human chromosome 7.</title>
        <authorList>
            <person name="Hillier L.W."/>
            <person name="Fulton R.S."/>
            <person name="Fulton L.A."/>
            <person name="Graves T.A."/>
            <person name="Pepin K.H."/>
            <person name="Wagner-McPherson C."/>
            <person name="Layman D."/>
            <person name="Maas J."/>
            <person name="Jaeger S."/>
            <person name="Walker R."/>
            <person name="Wylie K."/>
            <person name="Sekhon M."/>
            <person name="Becker M.C."/>
            <person name="O'Laughlin M.D."/>
            <person name="Schaller M.E."/>
            <person name="Fewell G.A."/>
            <person name="Delehaunty K.D."/>
            <person name="Miner T.L."/>
            <person name="Nash W.E."/>
            <person name="Cordes M."/>
            <person name="Du H."/>
            <person name="Sun H."/>
            <person name="Edwards J."/>
            <person name="Bradshaw-Cordum H."/>
            <person name="Ali J."/>
            <person name="Andrews S."/>
            <person name="Isak A."/>
            <person name="Vanbrunt A."/>
            <person name="Nguyen C."/>
            <person name="Du F."/>
            <person name="Lamar B."/>
            <person name="Courtney L."/>
            <person name="Kalicki J."/>
            <person name="Ozersky P."/>
            <person name="Bielicki L."/>
            <person name="Scott K."/>
            <person name="Holmes A."/>
            <person name="Harkins R."/>
            <person name="Harris A."/>
            <person name="Strong C.M."/>
            <person name="Hou S."/>
            <person name="Tomlinson C."/>
            <person name="Dauphin-Kohlberg S."/>
            <person name="Kozlowicz-Reilly A."/>
            <person name="Leonard S."/>
            <person name="Rohlfing T."/>
            <person name="Rock S.M."/>
            <person name="Tin-Wollam A.-M."/>
            <person name="Abbott A."/>
            <person name="Minx P."/>
            <person name="Maupin R."/>
            <person name="Strowmatt C."/>
            <person name="Latreille P."/>
            <person name="Miller N."/>
            <person name="Johnson D."/>
            <person name="Murray J."/>
            <person name="Woessner J.P."/>
            <person name="Wendl M.C."/>
            <person name="Yang S.-P."/>
            <person name="Schultz B.R."/>
            <person name="Wallis J.W."/>
            <person name="Spieth J."/>
            <person name="Bieri T.A."/>
            <person name="Nelson J.O."/>
            <person name="Berkowicz N."/>
            <person name="Wohldmann P.E."/>
            <person name="Cook L.L."/>
            <person name="Hickenbotham M.T."/>
            <person name="Eldred J."/>
            <person name="Williams D."/>
            <person name="Bedell J.A."/>
            <person name="Mardis E.R."/>
            <person name="Clifton S.W."/>
            <person name="Chissoe S.L."/>
            <person name="Marra M.A."/>
            <person name="Raymond C."/>
            <person name="Haugen E."/>
            <person name="Gillett W."/>
            <person name="Zhou Y."/>
            <person name="James R."/>
            <person name="Phelps K."/>
            <person name="Iadanoto S."/>
            <person name="Bubb K."/>
            <person name="Simms E."/>
            <person name="Levy R."/>
            <person name="Clendenning J."/>
            <person name="Kaul R."/>
            <person name="Kent W.J."/>
            <person name="Furey T.S."/>
            <person name="Baertsch R.A."/>
            <person name="Brent M.R."/>
            <person name="Keibler E."/>
            <person name="Flicek P."/>
            <person name="Bork P."/>
            <person name="Suyama M."/>
            <person name="Bailey J.A."/>
            <person name="Portnoy M.E."/>
            <person name="Torrents D."/>
            <person name="Chinwalla A.T."/>
            <person name="Gish W.R."/>
            <person name="Eddy S.R."/>
            <person name="McPherson J.D."/>
            <person name="Olson M.V."/>
            <person name="Eichler E.E."/>
            <person name="Green E.D."/>
            <person name="Waterston R.H."/>
            <person name="Wilson R.K."/>
        </authorList>
    </citation>
    <scope>NUCLEOTIDE SEQUENCE [LARGE SCALE GENOMIC DNA]</scope>
</reference>
<protein>
    <recommendedName>
        <fullName>Tripartite motif-containing protein 73</fullName>
    </recommendedName>
    <alternativeName>
        <fullName>Tripartite motif-containing protein 50B</fullName>
    </alternativeName>
</protein>
<sequence>MAWQVSLLELEDRLQCPICLEVFKESLMLQCGHSYCKGCLVSLSYHLDTKVRCPMCWQVVDGSSSLPNVSLAWVIEALRLPGDPEPKVCVHHRNPLSLFCEKDQELICGLCGLLGSHQHHPVTPVSTVCSRMKEELAALFSELKQEQKKVDELIAKLVKNRTRIVNESDVFSWVIRREFQELRHPVDEEKARCLEGIGGHTRGLVASLDMQLEQAQGTRERLAQAECVLEQFGNEDHHEFIWKFHSMASR</sequence>
<comment type="similarity">
    <text evidence="4">Belongs to the TRIM/RBCC family.</text>
</comment>
<name>TRI73_HUMAN</name>
<gene>
    <name type="primary">TRIM73</name>
    <name type="synonym">TRIM50B</name>
</gene>
<feature type="chain" id="PRO_0000056278" description="Tripartite motif-containing protein 73">
    <location>
        <begin position="1"/>
        <end position="250"/>
    </location>
</feature>
<feature type="zinc finger region" description="RING-type" evidence="3">
    <location>
        <begin position="16"/>
        <end position="57"/>
    </location>
</feature>
<feature type="zinc finger region" description="B box-type" evidence="2">
    <location>
        <begin position="84"/>
        <end position="125"/>
    </location>
</feature>
<feature type="coiled-coil region" evidence="1">
    <location>
        <begin position="125"/>
        <end position="169"/>
    </location>
</feature>
<feature type="coiled-coil region" evidence="1">
    <location>
        <begin position="204"/>
        <end position="235"/>
    </location>
</feature>
<feature type="binding site" evidence="2">
    <location>
        <position position="89"/>
    </location>
    <ligand>
        <name>Zn(2+)</name>
        <dbReference type="ChEBI" id="CHEBI:29105"/>
    </ligand>
</feature>
<feature type="binding site" evidence="2">
    <location>
        <position position="92"/>
    </location>
    <ligand>
        <name>Zn(2+)</name>
        <dbReference type="ChEBI" id="CHEBI:29105"/>
    </ligand>
</feature>
<feature type="binding site" evidence="2">
    <location>
        <position position="111"/>
    </location>
    <ligand>
        <name>Zn(2+)</name>
        <dbReference type="ChEBI" id="CHEBI:29105"/>
    </ligand>
</feature>
<feature type="binding site" evidence="2">
    <location>
        <position position="117"/>
    </location>
    <ligand>
        <name>Zn(2+)</name>
        <dbReference type="ChEBI" id="CHEBI:29105"/>
    </ligand>
</feature>
<proteinExistence type="evidence at transcript level"/>
<dbReference type="EMBL" id="AF498998">
    <property type="protein sequence ID" value="AAP30735.1"/>
    <property type="molecule type" value="mRNA"/>
</dbReference>
<dbReference type="EMBL" id="AC006014">
    <property type="status" value="NOT_ANNOTATED_CDS"/>
    <property type="molecule type" value="Genomic_DNA"/>
</dbReference>
<dbReference type="CCDS" id="CCDS34665.1"/>
<dbReference type="RefSeq" id="NP_944606.2">
    <property type="nucleotide sequence ID" value="NM_198924.4"/>
</dbReference>
<dbReference type="SMR" id="Q86UV7"/>
<dbReference type="BioGRID" id="131985">
    <property type="interactions" value="21"/>
</dbReference>
<dbReference type="FunCoup" id="Q86UV7">
    <property type="interactions" value="10"/>
</dbReference>
<dbReference type="IntAct" id="Q86UV7">
    <property type="interactions" value="1"/>
</dbReference>
<dbReference type="STRING" id="9606.ENSP00000318615"/>
<dbReference type="BioMuta" id="TRIM73"/>
<dbReference type="DMDM" id="56404880"/>
<dbReference type="jPOST" id="Q86UV7"/>
<dbReference type="MassIVE" id="Q86UV7"/>
<dbReference type="PaxDb" id="9606-ENSP00000318615"/>
<dbReference type="Antibodypedia" id="56753">
    <property type="antibodies" value="49 antibodies from 12 providers"/>
</dbReference>
<dbReference type="DNASU" id="375593"/>
<dbReference type="Ensembl" id="ENST00000323819.8">
    <property type="protein sequence ID" value="ENSP00000318615.3"/>
    <property type="gene ID" value="ENSG00000178809.12"/>
</dbReference>
<dbReference type="GeneID" id="375593"/>
<dbReference type="KEGG" id="hsa:375593"/>
<dbReference type="MANE-Select" id="ENST00000323819.8">
    <property type="protein sequence ID" value="ENSP00000318615.3"/>
    <property type="RefSeq nucleotide sequence ID" value="NM_198924.4"/>
    <property type="RefSeq protein sequence ID" value="NP_944606.2"/>
</dbReference>
<dbReference type="UCSC" id="uc003udc.2">
    <property type="organism name" value="human"/>
</dbReference>
<dbReference type="AGR" id="HGNC:18162"/>
<dbReference type="CTD" id="375593"/>
<dbReference type="DisGeNET" id="375593"/>
<dbReference type="GeneCards" id="TRIM73"/>
<dbReference type="HGNC" id="HGNC:18162">
    <property type="gene designation" value="TRIM73"/>
</dbReference>
<dbReference type="HPA" id="ENSG00000178809">
    <property type="expression patterns" value="Low tissue specificity"/>
</dbReference>
<dbReference type="MIM" id="612549">
    <property type="type" value="gene"/>
</dbReference>
<dbReference type="neXtProt" id="NX_Q86UV7"/>
<dbReference type="OpenTargets" id="ENSG00000178809"/>
<dbReference type="PharmGKB" id="PA38510"/>
<dbReference type="VEuPathDB" id="HostDB:ENSG00000178809"/>
<dbReference type="eggNOG" id="KOG2177">
    <property type="taxonomic scope" value="Eukaryota"/>
</dbReference>
<dbReference type="GeneTree" id="ENSGT00940000167700"/>
<dbReference type="InParanoid" id="Q86UV7"/>
<dbReference type="OMA" id="NIVECAR"/>
<dbReference type="OrthoDB" id="6105938at2759"/>
<dbReference type="PAN-GO" id="Q86UV7">
    <property type="GO annotations" value="3 GO annotations based on evolutionary models"/>
</dbReference>
<dbReference type="PhylomeDB" id="Q86UV7"/>
<dbReference type="TreeFam" id="TF342569"/>
<dbReference type="PathwayCommons" id="Q86UV7"/>
<dbReference type="SignaLink" id="Q86UV7"/>
<dbReference type="SIGNOR" id="Q86UV7"/>
<dbReference type="BioGRID-ORCS" id="375593">
    <property type="hits" value="39 hits in 1060 CRISPR screens"/>
</dbReference>
<dbReference type="GenomeRNAi" id="375593"/>
<dbReference type="Pharos" id="Q86UV7">
    <property type="development level" value="Tdark"/>
</dbReference>
<dbReference type="PRO" id="PR:Q86UV7"/>
<dbReference type="Proteomes" id="UP000005640">
    <property type="component" value="Chromosome 7"/>
</dbReference>
<dbReference type="RNAct" id="Q86UV7">
    <property type="molecule type" value="protein"/>
</dbReference>
<dbReference type="Bgee" id="ENSG00000178809">
    <property type="expression patterns" value="Expressed in fundus of stomach and 96 other cell types or tissues"/>
</dbReference>
<dbReference type="ExpressionAtlas" id="Q86UV7">
    <property type="expression patterns" value="baseline and differential"/>
</dbReference>
<dbReference type="GO" id="GO:0005737">
    <property type="term" value="C:cytoplasm"/>
    <property type="evidence" value="ECO:0000318"/>
    <property type="project" value="GO_Central"/>
</dbReference>
<dbReference type="GO" id="GO:0005829">
    <property type="term" value="C:cytosol"/>
    <property type="evidence" value="ECO:0000314"/>
    <property type="project" value="HPA"/>
</dbReference>
<dbReference type="GO" id="GO:0061630">
    <property type="term" value="F:ubiquitin protein ligase activity"/>
    <property type="evidence" value="ECO:0000318"/>
    <property type="project" value="GO_Central"/>
</dbReference>
<dbReference type="GO" id="GO:0008270">
    <property type="term" value="F:zinc ion binding"/>
    <property type="evidence" value="ECO:0007669"/>
    <property type="project" value="UniProtKB-KW"/>
</dbReference>
<dbReference type="GO" id="GO:0045087">
    <property type="term" value="P:innate immune response"/>
    <property type="evidence" value="ECO:0000318"/>
    <property type="project" value="GO_Central"/>
</dbReference>
<dbReference type="CDD" id="cd19787">
    <property type="entry name" value="Bbox2_TRIM50-like"/>
    <property type="match status" value="1"/>
</dbReference>
<dbReference type="FunFam" id="3.30.160.60:FF:001490">
    <property type="entry name" value="E3 ubiquitin-protein ligase TRIM50"/>
    <property type="match status" value="1"/>
</dbReference>
<dbReference type="Gene3D" id="3.30.160.60">
    <property type="entry name" value="Classic Zinc Finger"/>
    <property type="match status" value="1"/>
</dbReference>
<dbReference type="Gene3D" id="3.30.40.10">
    <property type="entry name" value="Zinc/RING finger domain, C3HC4 (zinc finger)"/>
    <property type="match status" value="1"/>
</dbReference>
<dbReference type="InterPro" id="IPR050143">
    <property type="entry name" value="TRIM/RBCC"/>
</dbReference>
<dbReference type="InterPro" id="IPR027370">
    <property type="entry name" value="Znf-RING_euk"/>
</dbReference>
<dbReference type="InterPro" id="IPR000315">
    <property type="entry name" value="Znf_B-box"/>
</dbReference>
<dbReference type="InterPro" id="IPR001841">
    <property type="entry name" value="Znf_RING"/>
</dbReference>
<dbReference type="InterPro" id="IPR013083">
    <property type="entry name" value="Znf_RING/FYVE/PHD"/>
</dbReference>
<dbReference type="InterPro" id="IPR017907">
    <property type="entry name" value="Znf_RING_CS"/>
</dbReference>
<dbReference type="PANTHER" id="PTHR24103">
    <property type="entry name" value="E3 UBIQUITIN-PROTEIN LIGASE TRIM"/>
    <property type="match status" value="1"/>
</dbReference>
<dbReference type="Pfam" id="PF00643">
    <property type="entry name" value="zf-B_box"/>
    <property type="match status" value="1"/>
</dbReference>
<dbReference type="Pfam" id="PF13445">
    <property type="entry name" value="zf-RING_UBOX"/>
    <property type="match status" value="1"/>
</dbReference>
<dbReference type="SMART" id="SM00336">
    <property type="entry name" value="BBOX"/>
    <property type="match status" value="1"/>
</dbReference>
<dbReference type="SMART" id="SM00184">
    <property type="entry name" value="RING"/>
    <property type="match status" value="1"/>
</dbReference>
<dbReference type="SUPFAM" id="SSF57845">
    <property type="entry name" value="B-box zinc-binding domain"/>
    <property type="match status" value="1"/>
</dbReference>
<dbReference type="SUPFAM" id="SSF57850">
    <property type="entry name" value="RING/U-box"/>
    <property type="match status" value="1"/>
</dbReference>
<dbReference type="PROSITE" id="PS50119">
    <property type="entry name" value="ZF_BBOX"/>
    <property type="match status" value="1"/>
</dbReference>
<dbReference type="PROSITE" id="PS00518">
    <property type="entry name" value="ZF_RING_1"/>
    <property type="match status" value="1"/>
</dbReference>
<dbReference type="PROSITE" id="PS50089">
    <property type="entry name" value="ZF_RING_2"/>
    <property type="match status" value="1"/>
</dbReference>
<evidence type="ECO:0000255" key="1"/>
<evidence type="ECO:0000255" key="2">
    <source>
        <dbReference type="PROSITE-ProRule" id="PRU00024"/>
    </source>
</evidence>
<evidence type="ECO:0000255" key="3">
    <source>
        <dbReference type="PROSITE-ProRule" id="PRU00175"/>
    </source>
</evidence>
<evidence type="ECO:0000305" key="4"/>
<organism>
    <name type="scientific">Homo sapiens</name>
    <name type="common">Human</name>
    <dbReference type="NCBI Taxonomy" id="9606"/>
    <lineage>
        <taxon>Eukaryota</taxon>
        <taxon>Metazoa</taxon>
        <taxon>Chordata</taxon>
        <taxon>Craniata</taxon>
        <taxon>Vertebrata</taxon>
        <taxon>Euteleostomi</taxon>
        <taxon>Mammalia</taxon>
        <taxon>Eutheria</taxon>
        <taxon>Euarchontoglires</taxon>
        <taxon>Primates</taxon>
        <taxon>Haplorrhini</taxon>
        <taxon>Catarrhini</taxon>
        <taxon>Hominidae</taxon>
        <taxon>Homo</taxon>
    </lineage>
</organism>